<accession>A1WUS2</accession>
<comment type="function">
    <text evidence="1">Catalyzes the interconversion of L-alanine and D-alanine. May also act on other amino acids.</text>
</comment>
<comment type="catalytic activity">
    <reaction evidence="1">
        <text>L-alanine = D-alanine</text>
        <dbReference type="Rhea" id="RHEA:20249"/>
        <dbReference type="ChEBI" id="CHEBI:57416"/>
        <dbReference type="ChEBI" id="CHEBI:57972"/>
        <dbReference type="EC" id="5.1.1.1"/>
    </reaction>
</comment>
<comment type="cofactor">
    <cofactor evidence="1">
        <name>pyridoxal 5'-phosphate</name>
        <dbReference type="ChEBI" id="CHEBI:597326"/>
    </cofactor>
</comment>
<comment type="pathway">
    <text evidence="1">Amino-acid biosynthesis; D-alanine biosynthesis; D-alanine from L-alanine: step 1/1.</text>
</comment>
<comment type="similarity">
    <text evidence="1">Belongs to the alanine racemase family.</text>
</comment>
<keyword id="KW-0413">Isomerase</keyword>
<keyword id="KW-0663">Pyridoxal phosphate</keyword>
<keyword id="KW-1185">Reference proteome</keyword>
<sequence length="364" mass="38709">MSRAARATVNLSALRANLRTARAAAPQQRIMAVIKSDGYGHGLAVVAGALTGHAEAFAVTDADEAEALRAAGFRERIVLLQGPFAVDDLARAAAADLELVIHAHWQVEALAQAQLASPVTVWLKVDSGMHRLGFPPEEVQDAWRRLTEASCVRADIGFLTHLACADDRDDPATERQLETFQAACDGLPGPRSAANSAGVLGWPASHYDWVRPGIMLYGASPFVDGRDEQPALQPAMAFQGRVVAVRHLRAGDPVGYGATWSCPEAMPVGVVSIGYGDGYPRHAPSGTPVEVAGQRTRLVGRISMDMLAVDLRGLDPVAEGDPAILWGGAVRAEEVAGACGTIAYELFCRMPPRVRREPVDGETL</sequence>
<dbReference type="EC" id="5.1.1.1" evidence="1"/>
<dbReference type="EMBL" id="CP000544">
    <property type="protein sequence ID" value="ABM61434.1"/>
    <property type="molecule type" value="Genomic_DNA"/>
</dbReference>
<dbReference type="RefSeq" id="WP_011813457.1">
    <property type="nucleotide sequence ID" value="NC_008789.1"/>
</dbReference>
<dbReference type="SMR" id="A1WUS2"/>
<dbReference type="STRING" id="349124.Hhal_0652"/>
<dbReference type="KEGG" id="hha:Hhal_0652"/>
<dbReference type="eggNOG" id="COG0787">
    <property type="taxonomic scope" value="Bacteria"/>
</dbReference>
<dbReference type="HOGENOM" id="CLU_028393_1_0_6"/>
<dbReference type="OrthoDB" id="9813814at2"/>
<dbReference type="UniPathway" id="UPA00042">
    <property type="reaction ID" value="UER00497"/>
</dbReference>
<dbReference type="Proteomes" id="UP000000647">
    <property type="component" value="Chromosome"/>
</dbReference>
<dbReference type="GO" id="GO:0005829">
    <property type="term" value="C:cytosol"/>
    <property type="evidence" value="ECO:0007669"/>
    <property type="project" value="TreeGrafter"/>
</dbReference>
<dbReference type="GO" id="GO:0008784">
    <property type="term" value="F:alanine racemase activity"/>
    <property type="evidence" value="ECO:0007669"/>
    <property type="project" value="UniProtKB-UniRule"/>
</dbReference>
<dbReference type="GO" id="GO:0030170">
    <property type="term" value="F:pyridoxal phosphate binding"/>
    <property type="evidence" value="ECO:0007669"/>
    <property type="project" value="UniProtKB-UniRule"/>
</dbReference>
<dbReference type="GO" id="GO:0030632">
    <property type="term" value="P:D-alanine biosynthetic process"/>
    <property type="evidence" value="ECO:0007669"/>
    <property type="project" value="UniProtKB-UniRule"/>
</dbReference>
<dbReference type="CDD" id="cd06827">
    <property type="entry name" value="PLPDE_III_AR_proteobact"/>
    <property type="match status" value="1"/>
</dbReference>
<dbReference type="FunFam" id="3.20.20.10:FF:000002">
    <property type="entry name" value="Alanine racemase"/>
    <property type="match status" value="1"/>
</dbReference>
<dbReference type="Gene3D" id="3.20.20.10">
    <property type="entry name" value="Alanine racemase"/>
    <property type="match status" value="1"/>
</dbReference>
<dbReference type="Gene3D" id="2.40.37.10">
    <property type="entry name" value="Lyase, Ornithine Decarboxylase, Chain A, domain 1"/>
    <property type="match status" value="1"/>
</dbReference>
<dbReference type="HAMAP" id="MF_01201">
    <property type="entry name" value="Ala_racemase"/>
    <property type="match status" value="1"/>
</dbReference>
<dbReference type="InterPro" id="IPR000821">
    <property type="entry name" value="Ala_racemase"/>
</dbReference>
<dbReference type="InterPro" id="IPR009006">
    <property type="entry name" value="Ala_racemase/Decarboxylase_C"/>
</dbReference>
<dbReference type="InterPro" id="IPR011079">
    <property type="entry name" value="Ala_racemase_C"/>
</dbReference>
<dbReference type="InterPro" id="IPR001608">
    <property type="entry name" value="Ala_racemase_N"/>
</dbReference>
<dbReference type="InterPro" id="IPR020622">
    <property type="entry name" value="Ala_racemase_pyridoxalP-BS"/>
</dbReference>
<dbReference type="InterPro" id="IPR029066">
    <property type="entry name" value="PLP-binding_barrel"/>
</dbReference>
<dbReference type="NCBIfam" id="TIGR00492">
    <property type="entry name" value="alr"/>
    <property type="match status" value="1"/>
</dbReference>
<dbReference type="PANTHER" id="PTHR30511">
    <property type="entry name" value="ALANINE RACEMASE"/>
    <property type="match status" value="1"/>
</dbReference>
<dbReference type="PANTHER" id="PTHR30511:SF0">
    <property type="entry name" value="ALANINE RACEMASE, CATABOLIC-RELATED"/>
    <property type="match status" value="1"/>
</dbReference>
<dbReference type="Pfam" id="PF00842">
    <property type="entry name" value="Ala_racemase_C"/>
    <property type="match status" value="1"/>
</dbReference>
<dbReference type="Pfam" id="PF01168">
    <property type="entry name" value="Ala_racemase_N"/>
    <property type="match status" value="1"/>
</dbReference>
<dbReference type="PRINTS" id="PR00992">
    <property type="entry name" value="ALARACEMASE"/>
</dbReference>
<dbReference type="SMART" id="SM01005">
    <property type="entry name" value="Ala_racemase_C"/>
    <property type="match status" value="1"/>
</dbReference>
<dbReference type="SUPFAM" id="SSF50621">
    <property type="entry name" value="Alanine racemase C-terminal domain-like"/>
    <property type="match status" value="1"/>
</dbReference>
<dbReference type="SUPFAM" id="SSF51419">
    <property type="entry name" value="PLP-binding barrel"/>
    <property type="match status" value="1"/>
</dbReference>
<dbReference type="PROSITE" id="PS00395">
    <property type="entry name" value="ALANINE_RACEMASE"/>
    <property type="match status" value="1"/>
</dbReference>
<name>ALR_HALHL</name>
<evidence type="ECO:0000255" key="1">
    <source>
        <dbReference type="HAMAP-Rule" id="MF_01201"/>
    </source>
</evidence>
<protein>
    <recommendedName>
        <fullName evidence="1">Alanine racemase</fullName>
        <ecNumber evidence="1">5.1.1.1</ecNumber>
    </recommendedName>
</protein>
<gene>
    <name type="primary">alr</name>
    <name type="ordered locus">Hhal_0652</name>
</gene>
<feature type="chain" id="PRO_1000164599" description="Alanine racemase">
    <location>
        <begin position="1"/>
        <end position="364"/>
    </location>
</feature>
<feature type="active site" description="Proton acceptor; specific for D-alanine" evidence="1">
    <location>
        <position position="35"/>
    </location>
</feature>
<feature type="active site" description="Proton acceptor; specific for L-alanine" evidence="1">
    <location>
        <position position="256"/>
    </location>
</feature>
<feature type="binding site" evidence="1">
    <location>
        <position position="131"/>
    </location>
    <ligand>
        <name>substrate</name>
    </ligand>
</feature>
<feature type="binding site" evidence="1">
    <location>
        <position position="304"/>
    </location>
    <ligand>
        <name>substrate</name>
    </ligand>
</feature>
<feature type="modified residue" description="N6-(pyridoxal phosphate)lysine" evidence="1">
    <location>
        <position position="35"/>
    </location>
</feature>
<organism>
    <name type="scientific">Halorhodospira halophila (strain DSM 244 / SL1)</name>
    <name type="common">Ectothiorhodospira halophila (strain DSM 244 / SL1)</name>
    <dbReference type="NCBI Taxonomy" id="349124"/>
    <lineage>
        <taxon>Bacteria</taxon>
        <taxon>Pseudomonadati</taxon>
        <taxon>Pseudomonadota</taxon>
        <taxon>Gammaproteobacteria</taxon>
        <taxon>Chromatiales</taxon>
        <taxon>Ectothiorhodospiraceae</taxon>
        <taxon>Halorhodospira</taxon>
    </lineage>
</organism>
<reference key="1">
    <citation type="submission" date="2006-12" db="EMBL/GenBank/DDBJ databases">
        <title>Complete sequence of Halorhodospira halophila SL1.</title>
        <authorList>
            <consortium name="US DOE Joint Genome Institute"/>
            <person name="Copeland A."/>
            <person name="Lucas S."/>
            <person name="Lapidus A."/>
            <person name="Barry K."/>
            <person name="Detter J.C."/>
            <person name="Glavina del Rio T."/>
            <person name="Hammon N."/>
            <person name="Israni S."/>
            <person name="Dalin E."/>
            <person name="Tice H."/>
            <person name="Pitluck S."/>
            <person name="Saunders E."/>
            <person name="Brettin T."/>
            <person name="Bruce D."/>
            <person name="Han C."/>
            <person name="Tapia R."/>
            <person name="Schmutz J."/>
            <person name="Larimer F."/>
            <person name="Land M."/>
            <person name="Hauser L."/>
            <person name="Kyrpides N."/>
            <person name="Mikhailova N."/>
            <person name="Hoff W."/>
            <person name="Richardson P."/>
        </authorList>
    </citation>
    <scope>NUCLEOTIDE SEQUENCE [LARGE SCALE GENOMIC DNA]</scope>
    <source>
        <strain>DSM 244 / SL1</strain>
    </source>
</reference>
<proteinExistence type="inferred from homology"/>